<sequence length="59" mass="6969">MSDGTAAMGKKGRKRVHIRCRRCGRHSFHRRKGYCAACGFGRSKRLRSYNWVRKKKNRT</sequence>
<comment type="function">
    <text evidence="1">Binds to the 23S rRNA.</text>
</comment>
<comment type="cofactor">
    <cofactor evidence="1">
        <name>Zn(2+)</name>
        <dbReference type="ChEBI" id="CHEBI:29105"/>
    </cofactor>
    <text evidence="1">Binds 1 zinc ion per subunit.</text>
</comment>
<comment type="similarity">
    <text evidence="3">Belongs to the eukaryotic ribosomal protein eL37 family.</text>
</comment>
<dbReference type="EMBL" id="AE000782">
    <property type="protein sequence ID" value="AAB90373.1"/>
    <property type="molecule type" value="Genomic_DNA"/>
</dbReference>
<dbReference type="PIR" id="B69359">
    <property type="entry name" value="B69359"/>
</dbReference>
<dbReference type="RefSeq" id="WP_010878375.1">
    <property type="nucleotide sequence ID" value="NC_000917.1"/>
</dbReference>
<dbReference type="SMR" id="O29387"/>
<dbReference type="STRING" id="224325.AF_0874"/>
<dbReference type="PaxDb" id="224325-AF_0874"/>
<dbReference type="EnsemblBacteria" id="AAB90373">
    <property type="protein sequence ID" value="AAB90373"/>
    <property type="gene ID" value="AF_0874"/>
</dbReference>
<dbReference type="KEGG" id="afu:AF_0874"/>
<dbReference type="eggNOG" id="arCOG04126">
    <property type="taxonomic scope" value="Archaea"/>
</dbReference>
<dbReference type="HOGENOM" id="CLU_208825_0_0_2"/>
<dbReference type="OrthoDB" id="5619at2157"/>
<dbReference type="PhylomeDB" id="O29387"/>
<dbReference type="Proteomes" id="UP000002199">
    <property type="component" value="Chromosome"/>
</dbReference>
<dbReference type="GO" id="GO:1990904">
    <property type="term" value="C:ribonucleoprotein complex"/>
    <property type="evidence" value="ECO:0007669"/>
    <property type="project" value="UniProtKB-KW"/>
</dbReference>
<dbReference type="GO" id="GO:0005840">
    <property type="term" value="C:ribosome"/>
    <property type="evidence" value="ECO:0007669"/>
    <property type="project" value="UniProtKB-KW"/>
</dbReference>
<dbReference type="GO" id="GO:0019843">
    <property type="term" value="F:rRNA binding"/>
    <property type="evidence" value="ECO:0007669"/>
    <property type="project" value="UniProtKB-KW"/>
</dbReference>
<dbReference type="GO" id="GO:0003735">
    <property type="term" value="F:structural constituent of ribosome"/>
    <property type="evidence" value="ECO:0007669"/>
    <property type="project" value="InterPro"/>
</dbReference>
<dbReference type="GO" id="GO:0008270">
    <property type="term" value="F:zinc ion binding"/>
    <property type="evidence" value="ECO:0007669"/>
    <property type="project" value="UniProtKB-UniRule"/>
</dbReference>
<dbReference type="GO" id="GO:0006412">
    <property type="term" value="P:translation"/>
    <property type="evidence" value="ECO:0007669"/>
    <property type="project" value="UniProtKB-UniRule"/>
</dbReference>
<dbReference type="FunFam" id="2.20.25.30:FF:000003">
    <property type="entry name" value="50S ribosomal protein L37e"/>
    <property type="match status" value="1"/>
</dbReference>
<dbReference type="Gene3D" id="2.20.25.30">
    <property type="match status" value="1"/>
</dbReference>
<dbReference type="HAMAP" id="MF_00547">
    <property type="entry name" value="Ribosomal_eL37"/>
    <property type="match status" value="1"/>
</dbReference>
<dbReference type="InterPro" id="IPR001569">
    <property type="entry name" value="Ribosomal_eL37"/>
</dbReference>
<dbReference type="InterPro" id="IPR011331">
    <property type="entry name" value="Ribosomal_eL37/eL43"/>
</dbReference>
<dbReference type="InterPro" id="IPR018267">
    <property type="entry name" value="Ribosomal_eL37_CS"/>
</dbReference>
<dbReference type="InterPro" id="IPR011332">
    <property type="entry name" value="Ribosomal_zn-bd"/>
</dbReference>
<dbReference type="NCBIfam" id="NF003214">
    <property type="entry name" value="PRK04179.1"/>
    <property type="match status" value="1"/>
</dbReference>
<dbReference type="Pfam" id="PF01907">
    <property type="entry name" value="Ribosomal_L37e"/>
    <property type="match status" value="1"/>
</dbReference>
<dbReference type="SUPFAM" id="SSF57829">
    <property type="entry name" value="Zn-binding ribosomal proteins"/>
    <property type="match status" value="1"/>
</dbReference>
<dbReference type="PROSITE" id="PS01077">
    <property type="entry name" value="RIBOSOMAL_L37E"/>
    <property type="match status" value="1"/>
</dbReference>
<feature type="chain" id="PRO_0000139725" description="Large ribosomal subunit protein eL37">
    <location>
        <begin position="1"/>
        <end position="59"/>
    </location>
</feature>
<feature type="zinc finger region" description="C4-type" evidence="2">
    <location>
        <begin position="20"/>
        <end position="38"/>
    </location>
</feature>
<feature type="binding site" evidence="1">
    <location>
        <position position="20"/>
    </location>
    <ligand>
        <name>Zn(2+)</name>
        <dbReference type="ChEBI" id="CHEBI:29105"/>
    </ligand>
</feature>
<feature type="binding site" evidence="1">
    <location>
        <position position="23"/>
    </location>
    <ligand>
        <name>Zn(2+)</name>
        <dbReference type="ChEBI" id="CHEBI:29105"/>
    </ligand>
</feature>
<feature type="binding site" evidence="1">
    <location>
        <position position="35"/>
    </location>
    <ligand>
        <name>Zn(2+)</name>
        <dbReference type="ChEBI" id="CHEBI:29105"/>
    </ligand>
</feature>
<feature type="binding site" evidence="1">
    <location>
        <position position="38"/>
    </location>
    <ligand>
        <name>Zn(2+)</name>
        <dbReference type="ChEBI" id="CHEBI:29105"/>
    </ligand>
</feature>
<keyword id="KW-0479">Metal-binding</keyword>
<keyword id="KW-1185">Reference proteome</keyword>
<keyword id="KW-0687">Ribonucleoprotein</keyword>
<keyword id="KW-0689">Ribosomal protein</keyword>
<keyword id="KW-0694">RNA-binding</keyword>
<keyword id="KW-0699">rRNA-binding</keyword>
<keyword id="KW-0862">Zinc</keyword>
<keyword id="KW-0863">Zinc-finger</keyword>
<evidence type="ECO:0000250" key="1"/>
<evidence type="ECO:0000255" key="2"/>
<evidence type="ECO:0000305" key="3"/>
<gene>
    <name type="primary">rpl37e</name>
    <name type="ordered locus">AF_0874</name>
</gene>
<name>RL37_ARCFU</name>
<proteinExistence type="inferred from homology"/>
<reference key="1">
    <citation type="journal article" date="1997" name="Nature">
        <title>The complete genome sequence of the hyperthermophilic, sulphate-reducing archaeon Archaeoglobus fulgidus.</title>
        <authorList>
            <person name="Klenk H.-P."/>
            <person name="Clayton R.A."/>
            <person name="Tomb J.-F."/>
            <person name="White O."/>
            <person name="Nelson K.E."/>
            <person name="Ketchum K.A."/>
            <person name="Dodson R.J."/>
            <person name="Gwinn M.L."/>
            <person name="Hickey E.K."/>
            <person name="Peterson J.D."/>
            <person name="Richardson D.L."/>
            <person name="Kerlavage A.R."/>
            <person name="Graham D.E."/>
            <person name="Kyrpides N.C."/>
            <person name="Fleischmann R.D."/>
            <person name="Quackenbush J."/>
            <person name="Lee N.H."/>
            <person name="Sutton G.G."/>
            <person name="Gill S.R."/>
            <person name="Kirkness E.F."/>
            <person name="Dougherty B.A."/>
            <person name="McKenney K."/>
            <person name="Adams M.D."/>
            <person name="Loftus B.J."/>
            <person name="Peterson S.N."/>
            <person name="Reich C.I."/>
            <person name="McNeil L.K."/>
            <person name="Badger J.H."/>
            <person name="Glodek A."/>
            <person name="Zhou L."/>
            <person name="Overbeek R."/>
            <person name="Gocayne J.D."/>
            <person name="Weidman J.F."/>
            <person name="McDonald L.A."/>
            <person name="Utterback T.R."/>
            <person name="Cotton M.D."/>
            <person name="Spriggs T."/>
            <person name="Artiach P."/>
            <person name="Kaine B.P."/>
            <person name="Sykes S.M."/>
            <person name="Sadow P.W."/>
            <person name="D'Andrea K.P."/>
            <person name="Bowman C."/>
            <person name="Fujii C."/>
            <person name="Garland S.A."/>
            <person name="Mason T.M."/>
            <person name="Olsen G.J."/>
            <person name="Fraser C.M."/>
            <person name="Smith H.O."/>
            <person name="Woese C.R."/>
            <person name="Venter J.C."/>
        </authorList>
    </citation>
    <scope>NUCLEOTIDE SEQUENCE [LARGE SCALE GENOMIC DNA]</scope>
    <source>
        <strain>ATCC 49558 / DSM 4304 / JCM 9628 / NBRC 100126 / VC-16</strain>
    </source>
</reference>
<organism>
    <name type="scientific">Archaeoglobus fulgidus (strain ATCC 49558 / DSM 4304 / JCM 9628 / NBRC 100126 / VC-16)</name>
    <dbReference type="NCBI Taxonomy" id="224325"/>
    <lineage>
        <taxon>Archaea</taxon>
        <taxon>Methanobacteriati</taxon>
        <taxon>Methanobacteriota</taxon>
        <taxon>Archaeoglobi</taxon>
        <taxon>Archaeoglobales</taxon>
        <taxon>Archaeoglobaceae</taxon>
        <taxon>Archaeoglobus</taxon>
    </lineage>
</organism>
<protein>
    <recommendedName>
        <fullName evidence="3">Large ribosomal subunit protein eL37</fullName>
    </recommendedName>
    <alternativeName>
        <fullName>50S ribosomal protein L37e</fullName>
    </alternativeName>
</protein>
<accession>O29387</accession>